<sequence length="67" mass="7272">MKLTCVLIAAVLLLAVCQLDSADATGYMRKNPSLRSPKRTRGCKSKGSFCWNGIECCGGNCFFACVY</sequence>
<name>O166B_CONCL</name>
<dbReference type="EMBL" id="FJ959156">
    <property type="protein sequence ID" value="ADB93126.1"/>
    <property type="molecule type" value="Genomic_DNA"/>
</dbReference>
<dbReference type="SMR" id="D6C4L4"/>
<dbReference type="ConoServer" id="4040">
    <property type="toxin name" value="Cal6.6b precursor"/>
</dbReference>
<dbReference type="GO" id="GO:0005576">
    <property type="term" value="C:extracellular region"/>
    <property type="evidence" value="ECO:0007669"/>
    <property type="project" value="UniProtKB-SubCell"/>
</dbReference>
<dbReference type="GO" id="GO:0008200">
    <property type="term" value="F:ion channel inhibitor activity"/>
    <property type="evidence" value="ECO:0007669"/>
    <property type="project" value="InterPro"/>
</dbReference>
<dbReference type="GO" id="GO:0090729">
    <property type="term" value="F:toxin activity"/>
    <property type="evidence" value="ECO:0007669"/>
    <property type="project" value="UniProtKB-KW"/>
</dbReference>
<dbReference type="InterPro" id="IPR004214">
    <property type="entry name" value="Conotoxin"/>
</dbReference>
<dbReference type="Pfam" id="PF02950">
    <property type="entry name" value="Conotoxin"/>
    <property type="match status" value="1"/>
</dbReference>
<evidence type="ECO:0000250" key="1"/>
<evidence type="ECO:0000255" key="2"/>
<evidence type="ECO:0000305" key="3"/>
<protein>
    <recommendedName>
        <fullName>Conotoxin Cl6.6b</fullName>
    </recommendedName>
</protein>
<accession>D6C4L4</accession>
<proteinExistence type="inferred from homology"/>
<organism>
    <name type="scientific">Californiconus californicus</name>
    <name type="common">California cone</name>
    <name type="synonym">Conus californicus</name>
    <dbReference type="NCBI Taxonomy" id="1736779"/>
    <lineage>
        <taxon>Eukaryota</taxon>
        <taxon>Metazoa</taxon>
        <taxon>Spiralia</taxon>
        <taxon>Lophotrochozoa</taxon>
        <taxon>Mollusca</taxon>
        <taxon>Gastropoda</taxon>
        <taxon>Caenogastropoda</taxon>
        <taxon>Neogastropoda</taxon>
        <taxon>Conoidea</taxon>
        <taxon>Conidae</taxon>
        <taxon>Californiconus</taxon>
    </lineage>
</organism>
<comment type="subcellular location">
    <subcellularLocation>
        <location evidence="1">Secreted</location>
    </subcellularLocation>
</comment>
<comment type="tissue specificity">
    <text>Expressed by the venom duct.</text>
</comment>
<comment type="domain">
    <text evidence="1">The presence of a 'disulfide through disulfide knot' structurally defines this protein as a knottin.</text>
</comment>
<comment type="domain">
    <text>The cysteine framework is VI/VII (C-C-CC-C-C).</text>
</comment>
<comment type="similarity">
    <text evidence="3">Belongs to the conotoxin O1 superfamily.</text>
</comment>
<keyword id="KW-1015">Disulfide bond</keyword>
<keyword id="KW-0960">Knottin</keyword>
<keyword id="KW-0528">Neurotoxin</keyword>
<keyword id="KW-0964">Secreted</keyword>
<keyword id="KW-0732">Signal</keyword>
<keyword id="KW-0800">Toxin</keyword>
<feature type="signal peptide" evidence="2">
    <location>
        <begin position="1"/>
        <end position="24"/>
    </location>
</feature>
<feature type="propeptide" id="PRO_0000414983" evidence="1">
    <location>
        <begin position="25"/>
        <end position="37"/>
    </location>
</feature>
<feature type="peptide" id="PRO_0000414984" description="Conotoxin Cl6.6b">
    <location>
        <begin position="40"/>
        <end position="67"/>
    </location>
</feature>
<feature type="disulfide bond" evidence="1">
    <location>
        <begin position="43"/>
        <end position="57"/>
    </location>
</feature>
<feature type="disulfide bond" evidence="1">
    <location>
        <begin position="50"/>
        <end position="61"/>
    </location>
</feature>
<feature type="disulfide bond" evidence="1">
    <location>
        <begin position="56"/>
        <end position="65"/>
    </location>
</feature>
<reference key="1">
    <citation type="journal article" date="2010" name="Mol. Phylogenet. Evol.">
        <title>Evolution of Conus peptide toxins: analysis of Conus californicus Reeve, 1844.</title>
        <authorList>
            <person name="Biggs J.S."/>
            <person name="Watkins M."/>
            <person name="Puillandre N."/>
            <person name="Ownby J.P."/>
            <person name="Lopez-Vera E."/>
            <person name="Christensen S."/>
            <person name="Moreno K.J."/>
            <person name="Bernaldez J."/>
            <person name="Licea-Navarro A."/>
            <person name="Corneli P.S."/>
            <person name="Olivera B.M."/>
        </authorList>
    </citation>
    <scope>NUCLEOTIDE SEQUENCE [GENOMIC DNA]</scope>
</reference>